<comment type="sequence caution" evidence="1">
    <conflict type="erroneous initiation">
        <sequence resource="EMBL-CDS" id="AAA62049"/>
    </conflict>
    <text>Extended N-terminus.</text>
</comment>
<keyword id="KW-1185">Reference proteome</keyword>
<dbReference type="EMBL" id="X04341">
    <property type="protein sequence ID" value="CAA27872.1"/>
    <property type="molecule type" value="Genomic_DNA"/>
</dbReference>
<dbReference type="EMBL" id="L10328">
    <property type="protein sequence ID" value="AAA62049.1"/>
    <property type="status" value="ALT_INIT"/>
    <property type="molecule type" value="Genomic_DNA"/>
</dbReference>
<dbReference type="EMBL" id="U00096">
    <property type="protein sequence ID" value="AAC76721.2"/>
    <property type="molecule type" value="Genomic_DNA"/>
</dbReference>
<dbReference type="EMBL" id="AP009048">
    <property type="protein sequence ID" value="BAE77596.1"/>
    <property type="molecule type" value="Genomic_DNA"/>
</dbReference>
<dbReference type="PIR" id="C65172">
    <property type="entry name" value="QQECG1"/>
</dbReference>
<dbReference type="RefSeq" id="NP_418153.4">
    <property type="nucleotide sequence ID" value="NC_000913.3"/>
</dbReference>
<dbReference type="RefSeq" id="WP_000522208.1">
    <property type="nucleotide sequence ID" value="NZ_STEB01000015.1"/>
</dbReference>
<dbReference type="SMR" id="P09996"/>
<dbReference type="BioGRID" id="4259571">
    <property type="interactions" value="250"/>
</dbReference>
<dbReference type="BioGRID" id="852514">
    <property type="interactions" value="1"/>
</dbReference>
<dbReference type="FunCoup" id="P09996">
    <property type="interactions" value="129"/>
</dbReference>
<dbReference type="IntAct" id="P09996">
    <property type="interactions" value="10"/>
</dbReference>
<dbReference type="STRING" id="511145.b3698"/>
<dbReference type="jPOST" id="P09996"/>
<dbReference type="PaxDb" id="511145-b3698"/>
<dbReference type="EnsemblBacteria" id="AAC76721">
    <property type="protein sequence ID" value="AAC76721"/>
    <property type="gene ID" value="b3698"/>
</dbReference>
<dbReference type="GeneID" id="948212"/>
<dbReference type="KEGG" id="ecj:JW3675"/>
<dbReference type="KEGG" id="eco:b3698"/>
<dbReference type="KEGG" id="ecoc:C3026_20045"/>
<dbReference type="PATRIC" id="fig|511145.12.peg.3821"/>
<dbReference type="EchoBASE" id="EB1182"/>
<dbReference type="eggNOG" id="COG3753">
    <property type="taxonomic scope" value="Bacteria"/>
</dbReference>
<dbReference type="HOGENOM" id="CLU_084747_5_0_6"/>
<dbReference type="InParanoid" id="P09996"/>
<dbReference type="OMA" id="WVSTGQN"/>
<dbReference type="PhylomeDB" id="P09996"/>
<dbReference type="BioCyc" id="EcoCyc:EG11196-MONOMER"/>
<dbReference type="PRO" id="PR:P09996"/>
<dbReference type="Proteomes" id="UP000000625">
    <property type="component" value="Chromosome"/>
</dbReference>
<dbReference type="Gene3D" id="1.10.10.690">
    <property type="entry name" value="YidB-like"/>
    <property type="match status" value="1"/>
</dbReference>
<dbReference type="InterPro" id="IPR045372">
    <property type="entry name" value="YidB"/>
</dbReference>
<dbReference type="InterPro" id="IPR027405">
    <property type="entry name" value="YidB-like"/>
</dbReference>
<dbReference type="NCBIfam" id="NF008509">
    <property type="entry name" value="PRK11426.1"/>
    <property type="match status" value="1"/>
</dbReference>
<dbReference type="Pfam" id="PF20159">
    <property type="entry name" value="YidB"/>
    <property type="match status" value="1"/>
</dbReference>
<dbReference type="SUPFAM" id="SSF140804">
    <property type="entry name" value="YidB-like"/>
    <property type="match status" value="1"/>
</dbReference>
<sequence>MGLFDEVVGAFLKGDAGKYQAILSWVEEQGGIQVLLEKLQSGGLGAILSTWLSNQQGNQSVSGEQLESALGTNAVSDLGQKLGVDTSTASSLLAEQLPKIIDALSPQGEVSPQANNDLLSAGMELLKGKLFR</sequence>
<gene>
    <name type="primary">yidB</name>
    <name type="ordered locus">b3698</name>
    <name type="ordered locus">JW3675</name>
</gene>
<reference key="1">
    <citation type="journal article" date="1987" name="Nucleic Acids Res.">
        <title>DNA sequence of the E. coli gyrB gene: application of a new sequencing strategy.</title>
        <authorList>
            <person name="Adachi T."/>
            <person name="Mizuuchi M."/>
            <person name="Robinson E.A."/>
            <person name="Appella E."/>
            <person name="O'Dea M.H."/>
            <person name="Gellert M."/>
            <person name="Mizuuchi K."/>
        </authorList>
    </citation>
    <scope>NUCLEOTIDE SEQUENCE [GENOMIC DNA]</scope>
</reference>
<reference key="2">
    <citation type="journal article" date="1993" name="Genomics">
        <title>DNA sequence and analysis of 136 kilobases of the Escherichia coli genome: organizational symmetry around the origin of replication.</title>
        <authorList>
            <person name="Burland V.D."/>
            <person name="Plunkett G. III"/>
            <person name="Daniels D.L."/>
            <person name="Blattner F.R."/>
        </authorList>
    </citation>
    <scope>NUCLEOTIDE SEQUENCE [LARGE SCALE GENOMIC DNA]</scope>
    <source>
        <strain>K12 / MG1655 / ATCC 47076</strain>
    </source>
</reference>
<reference key="3">
    <citation type="journal article" date="1997" name="Science">
        <title>The complete genome sequence of Escherichia coli K-12.</title>
        <authorList>
            <person name="Blattner F.R."/>
            <person name="Plunkett G. III"/>
            <person name="Bloch C.A."/>
            <person name="Perna N.T."/>
            <person name="Burland V."/>
            <person name="Riley M."/>
            <person name="Collado-Vides J."/>
            <person name="Glasner J.D."/>
            <person name="Rode C.K."/>
            <person name="Mayhew G.F."/>
            <person name="Gregor J."/>
            <person name="Davis N.W."/>
            <person name="Kirkpatrick H.A."/>
            <person name="Goeden M.A."/>
            <person name="Rose D.J."/>
            <person name="Mau B."/>
            <person name="Shao Y."/>
        </authorList>
    </citation>
    <scope>NUCLEOTIDE SEQUENCE [LARGE SCALE GENOMIC DNA]</scope>
    <source>
        <strain>K12 / MG1655 / ATCC 47076</strain>
    </source>
</reference>
<reference key="4">
    <citation type="journal article" date="2006" name="Mol. Syst. Biol.">
        <title>Highly accurate genome sequences of Escherichia coli K-12 strains MG1655 and W3110.</title>
        <authorList>
            <person name="Hayashi K."/>
            <person name="Morooka N."/>
            <person name="Yamamoto Y."/>
            <person name="Fujita K."/>
            <person name="Isono K."/>
            <person name="Choi S."/>
            <person name="Ohtsubo E."/>
            <person name="Baba T."/>
            <person name="Wanner B.L."/>
            <person name="Mori H."/>
            <person name="Horiuchi T."/>
        </authorList>
    </citation>
    <scope>NUCLEOTIDE SEQUENCE [LARGE SCALE GENOMIC DNA]</scope>
    <source>
        <strain>K12 / W3110 / ATCC 27325 / DSM 5911</strain>
    </source>
</reference>
<organism>
    <name type="scientific">Escherichia coli (strain K12)</name>
    <dbReference type="NCBI Taxonomy" id="83333"/>
    <lineage>
        <taxon>Bacteria</taxon>
        <taxon>Pseudomonadati</taxon>
        <taxon>Pseudomonadota</taxon>
        <taxon>Gammaproteobacteria</taxon>
        <taxon>Enterobacterales</taxon>
        <taxon>Enterobacteriaceae</taxon>
        <taxon>Escherichia</taxon>
    </lineage>
</organism>
<protein>
    <recommendedName>
        <fullName>Uncharacterized protein YidB</fullName>
    </recommendedName>
</protein>
<proteinExistence type="predicted"/>
<accession>P09996</accession>
<accession>P76738</accession>
<accession>Q2M810</accession>
<evidence type="ECO:0000305" key="1"/>
<name>YIDB_ECOLI</name>
<feature type="chain" id="PRO_0000169622" description="Uncharacterized protein YidB">
    <location>
        <begin position="1"/>
        <end position="132"/>
    </location>
</feature>